<dbReference type="EC" id="6.3.3.1" evidence="1"/>
<dbReference type="EMBL" id="BX950851">
    <property type="protein sequence ID" value="CAG74164.1"/>
    <property type="molecule type" value="Genomic_DNA"/>
</dbReference>
<dbReference type="RefSeq" id="WP_011092844.1">
    <property type="nucleotide sequence ID" value="NC_004547.2"/>
</dbReference>
<dbReference type="SMR" id="Q6D7S1"/>
<dbReference type="STRING" id="218491.ECA1254"/>
<dbReference type="KEGG" id="eca:ECA1254"/>
<dbReference type="PATRIC" id="fig|218491.5.peg.1275"/>
<dbReference type="eggNOG" id="COG0150">
    <property type="taxonomic scope" value="Bacteria"/>
</dbReference>
<dbReference type="HOGENOM" id="CLU_047116_0_0_6"/>
<dbReference type="OrthoDB" id="9777881at2"/>
<dbReference type="UniPathway" id="UPA00074">
    <property type="reaction ID" value="UER00129"/>
</dbReference>
<dbReference type="Proteomes" id="UP000007966">
    <property type="component" value="Chromosome"/>
</dbReference>
<dbReference type="GO" id="GO:0005829">
    <property type="term" value="C:cytosol"/>
    <property type="evidence" value="ECO:0007669"/>
    <property type="project" value="TreeGrafter"/>
</dbReference>
<dbReference type="GO" id="GO:0005524">
    <property type="term" value="F:ATP binding"/>
    <property type="evidence" value="ECO:0007669"/>
    <property type="project" value="UniProtKB-KW"/>
</dbReference>
<dbReference type="GO" id="GO:0004637">
    <property type="term" value="F:phosphoribosylamine-glycine ligase activity"/>
    <property type="evidence" value="ECO:0007669"/>
    <property type="project" value="TreeGrafter"/>
</dbReference>
<dbReference type="GO" id="GO:0004641">
    <property type="term" value="F:phosphoribosylformylglycinamidine cyclo-ligase activity"/>
    <property type="evidence" value="ECO:0007669"/>
    <property type="project" value="UniProtKB-UniRule"/>
</dbReference>
<dbReference type="GO" id="GO:0006189">
    <property type="term" value="P:'de novo' IMP biosynthetic process"/>
    <property type="evidence" value="ECO:0007669"/>
    <property type="project" value="UniProtKB-UniRule"/>
</dbReference>
<dbReference type="GO" id="GO:0046084">
    <property type="term" value="P:adenine biosynthetic process"/>
    <property type="evidence" value="ECO:0007669"/>
    <property type="project" value="TreeGrafter"/>
</dbReference>
<dbReference type="CDD" id="cd02196">
    <property type="entry name" value="PurM"/>
    <property type="match status" value="1"/>
</dbReference>
<dbReference type="FunFam" id="3.30.1330.10:FF:000001">
    <property type="entry name" value="Phosphoribosylformylglycinamidine cyclo-ligase"/>
    <property type="match status" value="1"/>
</dbReference>
<dbReference type="FunFam" id="3.90.650.10:FF:000001">
    <property type="entry name" value="Phosphoribosylformylglycinamidine cyclo-ligase"/>
    <property type="match status" value="1"/>
</dbReference>
<dbReference type="Gene3D" id="3.90.650.10">
    <property type="entry name" value="PurM-like C-terminal domain"/>
    <property type="match status" value="1"/>
</dbReference>
<dbReference type="Gene3D" id="3.30.1330.10">
    <property type="entry name" value="PurM-like, N-terminal domain"/>
    <property type="match status" value="1"/>
</dbReference>
<dbReference type="HAMAP" id="MF_00741">
    <property type="entry name" value="AIRS"/>
    <property type="match status" value="1"/>
</dbReference>
<dbReference type="InterPro" id="IPR010918">
    <property type="entry name" value="PurM-like_C_dom"/>
</dbReference>
<dbReference type="InterPro" id="IPR036676">
    <property type="entry name" value="PurM-like_C_sf"/>
</dbReference>
<dbReference type="InterPro" id="IPR016188">
    <property type="entry name" value="PurM-like_N"/>
</dbReference>
<dbReference type="InterPro" id="IPR036921">
    <property type="entry name" value="PurM-like_N_sf"/>
</dbReference>
<dbReference type="InterPro" id="IPR004733">
    <property type="entry name" value="PurM_cligase"/>
</dbReference>
<dbReference type="NCBIfam" id="TIGR00878">
    <property type="entry name" value="purM"/>
    <property type="match status" value="1"/>
</dbReference>
<dbReference type="PANTHER" id="PTHR10520:SF12">
    <property type="entry name" value="TRIFUNCTIONAL PURINE BIOSYNTHETIC PROTEIN ADENOSINE-3"/>
    <property type="match status" value="1"/>
</dbReference>
<dbReference type="PANTHER" id="PTHR10520">
    <property type="entry name" value="TRIFUNCTIONAL PURINE BIOSYNTHETIC PROTEIN ADENOSINE-3-RELATED"/>
    <property type="match status" value="1"/>
</dbReference>
<dbReference type="Pfam" id="PF00586">
    <property type="entry name" value="AIRS"/>
    <property type="match status" value="1"/>
</dbReference>
<dbReference type="Pfam" id="PF02769">
    <property type="entry name" value="AIRS_C"/>
    <property type="match status" value="1"/>
</dbReference>
<dbReference type="SUPFAM" id="SSF56042">
    <property type="entry name" value="PurM C-terminal domain-like"/>
    <property type="match status" value="1"/>
</dbReference>
<dbReference type="SUPFAM" id="SSF55326">
    <property type="entry name" value="PurM N-terminal domain-like"/>
    <property type="match status" value="1"/>
</dbReference>
<proteinExistence type="inferred from homology"/>
<organism>
    <name type="scientific">Pectobacterium atrosepticum (strain SCRI 1043 / ATCC BAA-672)</name>
    <name type="common">Erwinia carotovora subsp. atroseptica</name>
    <dbReference type="NCBI Taxonomy" id="218491"/>
    <lineage>
        <taxon>Bacteria</taxon>
        <taxon>Pseudomonadati</taxon>
        <taxon>Pseudomonadota</taxon>
        <taxon>Gammaproteobacteria</taxon>
        <taxon>Enterobacterales</taxon>
        <taxon>Pectobacteriaceae</taxon>
        <taxon>Pectobacterium</taxon>
    </lineage>
</organism>
<protein>
    <recommendedName>
        <fullName evidence="1">Phosphoribosylformylglycinamidine cyclo-ligase</fullName>
        <ecNumber evidence="1">6.3.3.1</ecNumber>
    </recommendedName>
    <alternativeName>
        <fullName evidence="1">AIR synthase</fullName>
    </alternativeName>
    <alternativeName>
        <fullName evidence="1">AIRS</fullName>
    </alternativeName>
    <alternativeName>
        <fullName evidence="1">Phosphoribosyl-aminoimidazole synthetase</fullName>
    </alternativeName>
</protein>
<sequence length="345" mass="36862">MTDKTSLSYKDAGVDIDAGNALVDRIKGVVKQTRRPEVMGGLGGFGALCALPQKYREPILVSGTDGVGTKLRLAMDLKRHDTIGIDLVAMCVNDLVVQGAEPLFFLDYYATGKLDVDTAASVITGIAEGCKQSGCALVGGETAEMPGMYHGEDYDVAGFCVGVVEKSEIIDGSKVQHGDVLVALAASGPHSNGYSLVRKVLEVSKTDPEQFELEGKSLADHLLAPTKIYVKSVLSLIEKVDVHAISHLTGGGFWENIPRVLPEGMQATIDESSWQWPAVFNWLQQAGNVSRYEMYRTFNCGVGMIIVLPAEQADEAVALLNSSGENAWKIGVITQTDAGDAVVIN</sequence>
<feature type="chain" id="PRO_0000258353" description="Phosphoribosylformylglycinamidine cyclo-ligase">
    <location>
        <begin position="1"/>
        <end position="345"/>
    </location>
</feature>
<accession>Q6D7S1</accession>
<name>PUR5_PECAS</name>
<comment type="catalytic activity">
    <reaction evidence="1">
        <text>2-formamido-N(1)-(5-O-phospho-beta-D-ribosyl)acetamidine + ATP = 5-amino-1-(5-phospho-beta-D-ribosyl)imidazole + ADP + phosphate + H(+)</text>
        <dbReference type="Rhea" id="RHEA:23032"/>
        <dbReference type="ChEBI" id="CHEBI:15378"/>
        <dbReference type="ChEBI" id="CHEBI:30616"/>
        <dbReference type="ChEBI" id="CHEBI:43474"/>
        <dbReference type="ChEBI" id="CHEBI:137981"/>
        <dbReference type="ChEBI" id="CHEBI:147287"/>
        <dbReference type="ChEBI" id="CHEBI:456216"/>
        <dbReference type="EC" id="6.3.3.1"/>
    </reaction>
</comment>
<comment type="pathway">
    <text evidence="1">Purine metabolism; IMP biosynthesis via de novo pathway; 5-amino-1-(5-phospho-D-ribosyl)imidazole from N(2)-formyl-N(1)-(5-phospho-D-ribosyl)glycinamide: step 2/2.</text>
</comment>
<comment type="subcellular location">
    <subcellularLocation>
        <location evidence="1">Cytoplasm</location>
    </subcellularLocation>
</comment>
<comment type="similarity">
    <text evidence="1">Belongs to the AIR synthase family.</text>
</comment>
<gene>
    <name evidence="1" type="primary">purM</name>
    <name type="ordered locus">ECA1254</name>
</gene>
<reference key="1">
    <citation type="journal article" date="2004" name="Proc. Natl. Acad. Sci. U.S.A.">
        <title>Genome sequence of the enterobacterial phytopathogen Erwinia carotovora subsp. atroseptica and characterization of virulence factors.</title>
        <authorList>
            <person name="Bell K.S."/>
            <person name="Sebaihia M."/>
            <person name="Pritchard L."/>
            <person name="Holden M.T.G."/>
            <person name="Hyman L.J."/>
            <person name="Holeva M.C."/>
            <person name="Thomson N.R."/>
            <person name="Bentley S.D."/>
            <person name="Churcher L.J.C."/>
            <person name="Mungall K."/>
            <person name="Atkin R."/>
            <person name="Bason N."/>
            <person name="Brooks K."/>
            <person name="Chillingworth T."/>
            <person name="Clark K."/>
            <person name="Doggett J."/>
            <person name="Fraser A."/>
            <person name="Hance Z."/>
            <person name="Hauser H."/>
            <person name="Jagels K."/>
            <person name="Moule S."/>
            <person name="Norbertczak H."/>
            <person name="Ormond D."/>
            <person name="Price C."/>
            <person name="Quail M.A."/>
            <person name="Sanders M."/>
            <person name="Walker D."/>
            <person name="Whitehead S."/>
            <person name="Salmond G.P.C."/>
            <person name="Birch P.R.J."/>
            <person name="Parkhill J."/>
            <person name="Toth I.K."/>
        </authorList>
    </citation>
    <scope>NUCLEOTIDE SEQUENCE [LARGE SCALE GENOMIC DNA]</scope>
    <source>
        <strain>SCRI 1043 / ATCC BAA-672</strain>
    </source>
</reference>
<keyword id="KW-0067">ATP-binding</keyword>
<keyword id="KW-0963">Cytoplasm</keyword>
<keyword id="KW-0436">Ligase</keyword>
<keyword id="KW-0547">Nucleotide-binding</keyword>
<keyword id="KW-0658">Purine biosynthesis</keyword>
<keyword id="KW-1185">Reference proteome</keyword>
<evidence type="ECO:0000255" key="1">
    <source>
        <dbReference type="HAMAP-Rule" id="MF_00741"/>
    </source>
</evidence>